<accession>C3K6E0</accession>
<organism>
    <name type="scientific">Pseudomonas fluorescens (strain SBW25)</name>
    <dbReference type="NCBI Taxonomy" id="216595"/>
    <lineage>
        <taxon>Bacteria</taxon>
        <taxon>Pseudomonadati</taxon>
        <taxon>Pseudomonadota</taxon>
        <taxon>Gammaproteobacteria</taxon>
        <taxon>Pseudomonadales</taxon>
        <taxon>Pseudomonadaceae</taxon>
        <taxon>Pseudomonas</taxon>
    </lineage>
</organism>
<dbReference type="EC" id="2.1.2.3" evidence="1"/>
<dbReference type="EC" id="3.5.4.10" evidence="1"/>
<dbReference type="EMBL" id="AM181176">
    <property type="protein sequence ID" value="CAY46881.1"/>
    <property type="molecule type" value="Genomic_DNA"/>
</dbReference>
<dbReference type="RefSeq" id="WP_012721993.1">
    <property type="nucleotide sequence ID" value="NC_012660.1"/>
</dbReference>
<dbReference type="SMR" id="C3K6E0"/>
<dbReference type="STRING" id="294.SRM1_00680"/>
<dbReference type="GeneID" id="93462209"/>
<dbReference type="PATRIC" id="fig|216595.4.peg.847"/>
<dbReference type="eggNOG" id="COG0138">
    <property type="taxonomic scope" value="Bacteria"/>
</dbReference>
<dbReference type="HOGENOM" id="CLU_016316_5_2_6"/>
<dbReference type="OrthoDB" id="9802065at2"/>
<dbReference type="UniPathway" id="UPA00074">
    <property type="reaction ID" value="UER00133"/>
</dbReference>
<dbReference type="UniPathway" id="UPA00074">
    <property type="reaction ID" value="UER00135"/>
</dbReference>
<dbReference type="GO" id="GO:0005829">
    <property type="term" value="C:cytosol"/>
    <property type="evidence" value="ECO:0007669"/>
    <property type="project" value="TreeGrafter"/>
</dbReference>
<dbReference type="GO" id="GO:0003937">
    <property type="term" value="F:IMP cyclohydrolase activity"/>
    <property type="evidence" value="ECO:0007669"/>
    <property type="project" value="UniProtKB-UniRule"/>
</dbReference>
<dbReference type="GO" id="GO:0004643">
    <property type="term" value="F:phosphoribosylaminoimidazolecarboxamide formyltransferase activity"/>
    <property type="evidence" value="ECO:0007669"/>
    <property type="project" value="UniProtKB-UniRule"/>
</dbReference>
<dbReference type="GO" id="GO:0006189">
    <property type="term" value="P:'de novo' IMP biosynthetic process"/>
    <property type="evidence" value="ECO:0007669"/>
    <property type="project" value="UniProtKB-UniRule"/>
</dbReference>
<dbReference type="CDD" id="cd01421">
    <property type="entry name" value="IMPCH"/>
    <property type="match status" value="1"/>
</dbReference>
<dbReference type="FunFam" id="3.40.140.20:FF:000001">
    <property type="entry name" value="Bifunctional purine biosynthesis protein PurH"/>
    <property type="match status" value="1"/>
</dbReference>
<dbReference type="FunFam" id="3.40.140.20:FF:000002">
    <property type="entry name" value="Bifunctional purine biosynthesis protein PurH"/>
    <property type="match status" value="1"/>
</dbReference>
<dbReference type="FunFam" id="3.40.50.1380:FF:000001">
    <property type="entry name" value="Bifunctional purine biosynthesis protein PurH"/>
    <property type="match status" value="1"/>
</dbReference>
<dbReference type="Gene3D" id="3.40.140.20">
    <property type="match status" value="2"/>
</dbReference>
<dbReference type="Gene3D" id="3.40.50.1380">
    <property type="entry name" value="Methylglyoxal synthase-like domain"/>
    <property type="match status" value="1"/>
</dbReference>
<dbReference type="HAMAP" id="MF_00139">
    <property type="entry name" value="PurH"/>
    <property type="match status" value="1"/>
</dbReference>
<dbReference type="InterPro" id="IPR024051">
    <property type="entry name" value="AICAR_Tfase_dup_dom_sf"/>
</dbReference>
<dbReference type="InterPro" id="IPR016193">
    <property type="entry name" value="Cytidine_deaminase-like"/>
</dbReference>
<dbReference type="InterPro" id="IPR011607">
    <property type="entry name" value="MGS-like_dom"/>
</dbReference>
<dbReference type="InterPro" id="IPR036914">
    <property type="entry name" value="MGS-like_dom_sf"/>
</dbReference>
<dbReference type="InterPro" id="IPR002695">
    <property type="entry name" value="PurH-like"/>
</dbReference>
<dbReference type="NCBIfam" id="NF002049">
    <property type="entry name" value="PRK00881.1"/>
    <property type="match status" value="1"/>
</dbReference>
<dbReference type="NCBIfam" id="TIGR00355">
    <property type="entry name" value="purH"/>
    <property type="match status" value="1"/>
</dbReference>
<dbReference type="PANTHER" id="PTHR11692:SF0">
    <property type="entry name" value="BIFUNCTIONAL PURINE BIOSYNTHESIS PROTEIN ATIC"/>
    <property type="match status" value="1"/>
</dbReference>
<dbReference type="PANTHER" id="PTHR11692">
    <property type="entry name" value="BIFUNCTIONAL PURINE BIOSYNTHESIS PROTEIN PURH"/>
    <property type="match status" value="1"/>
</dbReference>
<dbReference type="Pfam" id="PF01808">
    <property type="entry name" value="AICARFT_IMPCHas"/>
    <property type="match status" value="1"/>
</dbReference>
<dbReference type="Pfam" id="PF02142">
    <property type="entry name" value="MGS"/>
    <property type="match status" value="1"/>
</dbReference>
<dbReference type="PIRSF" id="PIRSF000414">
    <property type="entry name" value="AICARFT_IMPCHas"/>
    <property type="match status" value="1"/>
</dbReference>
<dbReference type="SMART" id="SM00798">
    <property type="entry name" value="AICARFT_IMPCHas"/>
    <property type="match status" value="1"/>
</dbReference>
<dbReference type="SMART" id="SM00851">
    <property type="entry name" value="MGS"/>
    <property type="match status" value="1"/>
</dbReference>
<dbReference type="SUPFAM" id="SSF53927">
    <property type="entry name" value="Cytidine deaminase-like"/>
    <property type="match status" value="1"/>
</dbReference>
<dbReference type="SUPFAM" id="SSF52335">
    <property type="entry name" value="Methylglyoxal synthase-like"/>
    <property type="match status" value="1"/>
</dbReference>
<dbReference type="PROSITE" id="PS51855">
    <property type="entry name" value="MGS"/>
    <property type="match status" value="1"/>
</dbReference>
<evidence type="ECO:0000255" key="1">
    <source>
        <dbReference type="HAMAP-Rule" id="MF_00139"/>
    </source>
</evidence>
<evidence type="ECO:0000255" key="2">
    <source>
        <dbReference type="PROSITE-ProRule" id="PRU01202"/>
    </source>
</evidence>
<reference key="1">
    <citation type="journal article" date="2009" name="Genome Biol.">
        <title>Genomic and genetic analyses of diversity and plant interactions of Pseudomonas fluorescens.</title>
        <authorList>
            <person name="Silby M.W."/>
            <person name="Cerdeno-Tarraga A.M."/>
            <person name="Vernikos G.S."/>
            <person name="Giddens S.R."/>
            <person name="Jackson R.W."/>
            <person name="Preston G.M."/>
            <person name="Zhang X.-X."/>
            <person name="Moon C.D."/>
            <person name="Gehrig S.M."/>
            <person name="Godfrey S.A.C."/>
            <person name="Knight C.G."/>
            <person name="Malone J.G."/>
            <person name="Robinson Z."/>
            <person name="Spiers A.J."/>
            <person name="Harris S."/>
            <person name="Challis G.L."/>
            <person name="Yaxley A.M."/>
            <person name="Harris D."/>
            <person name="Seeger K."/>
            <person name="Murphy L."/>
            <person name="Rutter S."/>
            <person name="Squares R."/>
            <person name="Quail M.A."/>
            <person name="Saunders E."/>
            <person name="Mavromatis K."/>
            <person name="Brettin T.S."/>
            <person name="Bentley S.D."/>
            <person name="Hothersall J."/>
            <person name="Stephens E."/>
            <person name="Thomas C.M."/>
            <person name="Parkhill J."/>
            <person name="Levy S.B."/>
            <person name="Rainey P.B."/>
            <person name="Thomson N.R."/>
        </authorList>
    </citation>
    <scope>NUCLEOTIDE SEQUENCE [LARGE SCALE GENOMIC DNA]</scope>
    <source>
        <strain>SBW25</strain>
    </source>
</reference>
<gene>
    <name evidence="1" type="primary">purH</name>
    <name type="ordered locus">PFLU_0612</name>
</gene>
<proteinExistence type="inferred from homology"/>
<comment type="catalytic activity">
    <reaction evidence="1">
        <text>(6R)-10-formyltetrahydrofolate + 5-amino-1-(5-phospho-beta-D-ribosyl)imidazole-4-carboxamide = 5-formamido-1-(5-phospho-D-ribosyl)imidazole-4-carboxamide + (6S)-5,6,7,8-tetrahydrofolate</text>
        <dbReference type="Rhea" id="RHEA:22192"/>
        <dbReference type="ChEBI" id="CHEBI:57453"/>
        <dbReference type="ChEBI" id="CHEBI:58467"/>
        <dbReference type="ChEBI" id="CHEBI:58475"/>
        <dbReference type="ChEBI" id="CHEBI:195366"/>
        <dbReference type="EC" id="2.1.2.3"/>
    </reaction>
</comment>
<comment type="catalytic activity">
    <reaction evidence="1">
        <text>IMP + H2O = 5-formamido-1-(5-phospho-D-ribosyl)imidazole-4-carboxamide</text>
        <dbReference type="Rhea" id="RHEA:18445"/>
        <dbReference type="ChEBI" id="CHEBI:15377"/>
        <dbReference type="ChEBI" id="CHEBI:58053"/>
        <dbReference type="ChEBI" id="CHEBI:58467"/>
        <dbReference type="EC" id="3.5.4.10"/>
    </reaction>
</comment>
<comment type="pathway">
    <text evidence="1">Purine metabolism; IMP biosynthesis via de novo pathway; 5-formamido-1-(5-phospho-D-ribosyl)imidazole-4-carboxamide from 5-amino-1-(5-phospho-D-ribosyl)imidazole-4-carboxamide (10-formyl THF route): step 1/1.</text>
</comment>
<comment type="pathway">
    <text evidence="1">Purine metabolism; IMP biosynthesis via de novo pathway; IMP from 5-formamido-1-(5-phospho-D-ribosyl)imidazole-4-carboxamide: step 1/1.</text>
</comment>
<comment type="domain">
    <text evidence="1">The IMP cyclohydrolase activity resides in the N-terminal region.</text>
</comment>
<comment type="similarity">
    <text evidence="1">Belongs to the PurH family.</text>
</comment>
<sequence length="535" mass="57406">MTDQTTRLPIRRALISVSDKTGILEFARELEALGVEILSTGGTFKLLQDNGVAAVEVADYTGFAEMMDGRVKTLHPKIHGGILGRRGIDDAIMTEHGIKPIDLVAVNLYPFEATINKPGCDLPTAIENIDIGGPTMVRSAAKNHKDVAIVVNASDYAQVLESLKAGGLTYAQRFDLMLKAFEHTAAYDGMIANYMGTVNQAAETLSTEGRSQFPRTFNSQFIKAQEMRYGENPHQSAAFYVEAKPAEVGIATATQLQGKELSYNNVADTDAALECVKSFVKPACVIVKHANPCGVAVSPDAEGGIRQAYELAYATDTESAFGGIIAFNRELDAETAKAIVERQFVEVIIAPSVSEEARAIVAAKANVRLLACGEWSADRAAAWDYKRVNGGLLVQSRDIGMIGSEDLKVVTKRAPTEQEINDLIFAWKVAKYVKSNAIVYAKNRQTIGVGAGQMSRVNSARIAAIKAEHAGLQVVGSVMASDAFFPFRDGLDNAAKAGVTAVIQPGGSMRDAEVIAAADEAGIAMVFTGMRHFRH</sequence>
<protein>
    <recommendedName>
        <fullName evidence="1">Bifunctional purine biosynthesis protein PurH</fullName>
    </recommendedName>
    <domain>
        <recommendedName>
            <fullName evidence="1">Phosphoribosylaminoimidazolecarboxamide formyltransferase</fullName>
            <ecNumber evidence="1">2.1.2.3</ecNumber>
        </recommendedName>
        <alternativeName>
            <fullName evidence="1">AICAR transformylase</fullName>
        </alternativeName>
    </domain>
    <domain>
        <recommendedName>
            <fullName evidence="1">IMP cyclohydrolase</fullName>
            <ecNumber evidence="1">3.5.4.10</ecNumber>
        </recommendedName>
        <alternativeName>
            <fullName evidence="1">ATIC</fullName>
        </alternativeName>
        <alternativeName>
            <fullName evidence="1">IMP synthase</fullName>
        </alternativeName>
        <alternativeName>
            <fullName evidence="1">Inosinicase</fullName>
        </alternativeName>
    </domain>
</protein>
<feature type="chain" id="PRO_1000203253" description="Bifunctional purine biosynthesis protein PurH">
    <location>
        <begin position="1"/>
        <end position="535"/>
    </location>
</feature>
<feature type="domain" description="MGS-like" evidence="2">
    <location>
        <begin position="6"/>
        <end position="151"/>
    </location>
</feature>
<name>PUR9_PSEFS</name>
<keyword id="KW-0378">Hydrolase</keyword>
<keyword id="KW-0511">Multifunctional enzyme</keyword>
<keyword id="KW-0658">Purine biosynthesis</keyword>
<keyword id="KW-0808">Transferase</keyword>